<comment type="function">
    <text>May have a role in development. May regulate its own transcription. May bind the bicoid consensus sequence TAATCC.</text>
</comment>
<comment type="interaction">
    <interactant intactId="EBI-19954058">
        <id>O15499</id>
    </interactant>
    <interactant intactId="EBI-1211484">
        <id>P05187</id>
        <label>ALPP</label>
    </interactant>
    <organismsDiffer>false</organismsDiffer>
    <experiments>3</experiments>
</comment>
<comment type="interaction">
    <interactant intactId="EBI-19954058">
        <id>O15499</id>
    </interactant>
    <interactant intactId="EBI-296601">
        <id>P08758</id>
        <label>ANXA5</label>
    </interactant>
    <organismsDiffer>false</organismsDiffer>
    <experiments>3</experiments>
</comment>
<comment type="interaction">
    <interactant intactId="EBI-19954058">
        <id>O15499</id>
    </interactant>
    <interactant intactId="EBI-12092171">
        <id>Q12797-6</id>
        <label>ASPH</label>
    </interactant>
    <organismsDiffer>false</organismsDiffer>
    <experiments>3</experiments>
</comment>
<comment type="interaction">
    <interactant intactId="EBI-19954058">
        <id>O15499</id>
    </interactant>
    <interactant intactId="EBI-20140863">
        <id>Q8N1M1-5</id>
        <label>BEST3</label>
    </interactant>
    <organismsDiffer>false</organismsDiffer>
    <experiments>3</experiments>
</comment>
<comment type="interaction">
    <interactant intactId="EBI-19954058">
        <id>O15499</id>
    </interactant>
    <interactant intactId="EBI-752094">
        <id>Q12982</id>
        <label>BNIP2</label>
    </interactant>
    <organismsDiffer>false</organismsDiffer>
    <experiments>3</experiments>
</comment>
<comment type="interaction">
    <interactant intactId="EBI-19954058">
        <id>O15499</id>
    </interactant>
    <interactant intactId="EBI-10979594">
        <id>Q8N9M1-2</id>
        <label>C19orf47</label>
    </interactant>
    <organismsDiffer>false</organismsDiffer>
    <experiments>3</experiments>
</comment>
<comment type="interaction">
    <interactant intactId="EBI-19954058">
        <id>O15499</id>
    </interactant>
    <interactant intactId="EBI-3844053">
        <id>Q13901</id>
        <label>C1D</label>
    </interactant>
    <organismsDiffer>false</organismsDiffer>
    <experiments>3</experiments>
</comment>
<comment type="interaction">
    <interactant intactId="EBI-19954058">
        <id>O15499</id>
    </interactant>
    <interactant intactId="EBI-1049597">
        <id>P27797</id>
        <label>CALR</label>
    </interactant>
    <organismsDiffer>false</organismsDiffer>
    <experiments>3</experiments>
</comment>
<comment type="interaction">
    <interactant intactId="EBI-19954058">
        <id>O15499</id>
    </interactant>
    <interactant intactId="EBI-745859">
        <id>P55273</id>
        <label>CDKN2D</label>
    </interactant>
    <organismsDiffer>false</organismsDiffer>
    <experiments>3</experiments>
</comment>
<comment type="interaction">
    <interactant intactId="EBI-19954058">
        <id>O15499</id>
    </interactant>
    <interactant intactId="EBI-752069">
        <id>Q9H5X1</id>
        <label>CIAO2A</label>
    </interactant>
    <organismsDiffer>false</organismsDiffer>
    <experiments>3</experiments>
</comment>
<comment type="interaction">
    <interactant intactId="EBI-19954058">
        <id>O15499</id>
    </interactant>
    <interactant intactId="EBI-747133">
        <id>P27658</id>
        <label>COL8A1</label>
    </interactant>
    <organismsDiffer>false</organismsDiffer>
    <experiments>3</experiments>
</comment>
<comment type="interaction">
    <interactant intactId="EBI-19954058">
        <id>O15499</id>
    </interactant>
    <interactant intactId="EBI-12880830">
        <id>O75575-2</id>
        <label>CRCP</label>
    </interactant>
    <organismsDiffer>false</organismsDiffer>
    <experiments>3</experiments>
</comment>
<comment type="interaction">
    <interactant intactId="EBI-19954058">
        <id>O15499</id>
    </interactant>
    <interactant intactId="EBI-347804">
        <id>P68400</id>
        <label>CSNK2A1</label>
    </interactant>
    <organismsDiffer>false</organismsDiffer>
    <experiments>3</experiments>
</comment>
<comment type="interaction">
    <interactant intactId="EBI-19954058">
        <id>O15499</id>
    </interactant>
    <interactant intactId="EBI-634187">
        <id>Q9Y463</id>
        <label>DYRK1B</label>
    </interactant>
    <organismsDiffer>false</organismsDiffer>
    <experiments>3</experiments>
</comment>
<comment type="interaction">
    <interactant intactId="EBI-19954058">
        <id>O15499</id>
    </interactant>
    <interactant intactId="EBI-1175354">
        <id>Q9H6Z9</id>
        <label>EGLN3</label>
    </interactant>
    <organismsDiffer>false</organismsDiffer>
    <experiments>3</experiments>
</comment>
<comment type="interaction">
    <interactant intactId="EBI-19954058">
        <id>O15499</id>
    </interactant>
    <interactant intactId="EBI-373150">
        <id>P63241</id>
        <label>EIF5A</label>
    </interactant>
    <organismsDiffer>false</organismsDiffer>
    <experiments>3</experiments>
</comment>
<comment type="interaction">
    <interactant intactId="EBI-19954058">
        <id>O15499</id>
    </interactant>
    <interactant intactId="EBI-2870454">
        <id>Q16134</id>
        <label>ETFDH</label>
    </interactant>
    <organismsDiffer>false</organismsDiffer>
    <experiments>3</experiments>
</comment>
<comment type="interaction">
    <interactant intactId="EBI-19954058">
        <id>O15499</id>
    </interactant>
    <interactant intactId="EBI-12006844">
        <id>A6H8Z2</id>
        <label>FAM221B</label>
    </interactant>
    <organismsDiffer>false</organismsDiffer>
    <experiments>3</experiments>
</comment>
<comment type="interaction">
    <interactant intactId="EBI-19954058">
        <id>O15499</id>
    </interactant>
    <interactant intactId="EBI-744771">
        <id>O75344</id>
        <label>FKBP6</label>
    </interactant>
    <organismsDiffer>false</organismsDiffer>
    <experiments>3</experiments>
</comment>
<comment type="interaction">
    <interactant intactId="EBI-19954058">
        <id>O15499</id>
    </interactant>
    <interactant intactId="EBI-13364322">
        <id>Q8NCW6-2</id>
        <label>GALNT11</label>
    </interactant>
    <organismsDiffer>false</organismsDiffer>
    <experiments>3</experiments>
</comment>
<comment type="interaction">
    <interactant intactId="EBI-19954058">
        <id>O15499</id>
    </interactant>
    <interactant intactId="EBI-10188645">
        <id>O75603</id>
        <label>GCM2</label>
    </interactant>
    <organismsDiffer>false</organismsDiffer>
    <experiments>3</experiments>
</comment>
<comment type="interaction">
    <interactant intactId="EBI-19954058">
        <id>O15499</id>
    </interactant>
    <interactant intactId="EBI-6380438">
        <id>Q6ZYL4</id>
        <label>GTF2H5</label>
    </interactant>
    <organismsDiffer>false</organismsDiffer>
    <experiments>3</experiments>
</comment>
<comment type="interaction">
    <interactant intactId="EBI-19954058">
        <id>O15499</id>
    </interactant>
    <interactant intactId="EBI-19128683">
        <id>Q9H1H1</id>
        <label>GTSF1L</label>
    </interactant>
    <organismsDiffer>false</organismsDiffer>
    <experiments>3</experiments>
</comment>
<comment type="interaction">
    <interactant intactId="EBI-19954058">
        <id>O15499</id>
    </interactant>
    <interactant intactId="EBI-6873005">
        <id>P43080</id>
        <label>GUCA1A</label>
    </interactant>
    <organismsDiffer>false</organismsDiffer>
    <experiments>3</experiments>
</comment>
<comment type="interaction">
    <interactant intactId="EBI-19954058">
        <id>O15499</id>
    </interactant>
    <interactant intactId="EBI-6911715">
        <id>P33402</id>
        <label>GUCY1A2</label>
    </interactant>
    <organismsDiffer>false</organismsDiffer>
    <experiments>3</experiments>
</comment>
<comment type="interaction">
    <interactant intactId="EBI-19954058">
        <id>O15499</id>
    </interactant>
    <interactant intactId="EBI-2549423">
        <id>Q6NT76</id>
        <label>HMBOX1</label>
    </interactant>
    <organismsDiffer>false</organismsDiffer>
    <experiments>3</experiments>
</comment>
<comment type="interaction">
    <interactant intactId="EBI-19954058">
        <id>O15499</id>
    </interactant>
    <interactant intactId="EBI-6426064">
        <id>Q2M1V0</id>
        <label>ISX</label>
    </interactant>
    <organismsDiffer>false</organismsDiffer>
    <experiments>3</experiments>
</comment>
<comment type="interaction">
    <interactant intactId="EBI-19954058">
        <id>O15499</id>
    </interactant>
    <interactant intactId="EBI-4292203">
        <id>O15550</id>
        <label>KDM6A</label>
    </interactant>
    <organismsDiffer>false</organismsDiffer>
    <experiments>3</experiments>
</comment>
<comment type="interaction">
    <interactant intactId="EBI-19954058">
        <id>O15499</id>
    </interactant>
    <interactant intactId="EBI-6426443">
        <id>Q2WGJ6</id>
        <label>KLHL38</label>
    </interactant>
    <organismsDiffer>false</organismsDiffer>
    <experiments>3</experiments>
</comment>
<comment type="interaction">
    <interactant intactId="EBI-19954058">
        <id>O15499</id>
    </interactant>
    <interactant intactId="EBI-1047093">
        <id>O76011</id>
        <label>KRT34</label>
    </interactant>
    <organismsDiffer>false</organismsDiffer>
    <experiments>3</experiments>
</comment>
<comment type="interaction">
    <interactant intactId="EBI-19954058">
        <id>O15499</id>
    </interactant>
    <interactant intactId="EBI-3958099">
        <id>P26371</id>
        <label>KRTAP5-9</label>
    </interactant>
    <organismsDiffer>false</organismsDiffer>
    <experiments>3</experiments>
</comment>
<comment type="interaction">
    <interactant intactId="EBI-19954058">
        <id>O15499</id>
    </interactant>
    <interactant intactId="EBI-10245456">
        <id>Q5T5B0</id>
        <label>LCE3E</label>
    </interactant>
    <organismsDiffer>false</organismsDiffer>
    <experiments>3</experiments>
</comment>
<comment type="interaction">
    <interactant intactId="EBI-19954058">
        <id>O15499</id>
    </interactant>
    <interactant intactId="EBI-12249832">
        <id>Q8WV07</id>
        <label>LTO1</label>
    </interactant>
    <organismsDiffer>false</organismsDiffer>
    <experiments>3</experiments>
</comment>
<comment type="interaction">
    <interactant intactId="EBI-19954058">
        <id>O15499</id>
    </interactant>
    <interactant intactId="EBI-77889">
        <id>Q9UI95</id>
        <label>MAD2L2</label>
    </interactant>
    <organismsDiffer>false</organismsDiffer>
    <experiments>3</experiments>
</comment>
<comment type="interaction">
    <interactant intactId="EBI-19954058">
        <id>O15499</id>
    </interactant>
    <interactant intactId="EBI-713568">
        <id>P45984</id>
        <label>MAPK9</label>
    </interactant>
    <organismsDiffer>false</organismsDiffer>
    <experiments>3</experiments>
</comment>
<comment type="interaction">
    <interactant intactId="EBI-19954058">
        <id>O15499</id>
    </interactant>
    <interactant intactId="EBI-5235902">
        <id>Q9Y4F3</id>
        <label>MARF1</label>
    </interactant>
    <organismsDiffer>false</organismsDiffer>
    <experiments>3</experiments>
</comment>
<comment type="interaction">
    <interactant intactId="EBI-19954058">
        <id>O15499</id>
    </interactant>
    <interactant intactId="EBI-10172526">
        <id>Q9UJV3-2</id>
        <label>MID2</label>
    </interactant>
    <organismsDiffer>false</organismsDiffer>
    <experiments>3</experiments>
</comment>
<comment type="interaction">
    <interactant intactId="EBI-19954058">
        <id>O15499</id>
    </interactant>
    <interactant intactId="EBI-10288852">
        <id>Q9UBU8-2</id>
        <label>MORF4L1</label>
    </interactant>
    <organismsDiffer>false</organismsDiffer>
    <experiments>3</experiments>
</comment>
<comment type="interaction">
    <interactant intactId="EBI-19954058">
        <id>O15499</id>
    </interactant>
    <interactant intactId="EBI-2513715">
        <id>Q96EL3</id>
        <label>MRPL53</label>
    </interactant>
    <organismsDiffer>false</organismsDiffer>
    <experiments>3</experiments>
</comment>
<comment type="interaction">
    <interactant intactId="EBI-19954058">
        <id>O15499</id>
    </interactant>
    <interactant intactId="EBI-1054270">
        <id>Q9Y3D9</id>
        <label>MRPS23</label>
    </interactant>
    <organismsDiffer>false</organismsDiffer>
    <experiments>3</experiments>
</comment>
<comment type="interaction">
    <interactant intactId="EBI-19954058">
        <id>O15499</id>
    </interactant>
    <interactant intactId="EBI-744782">
        <id>Q9Y5B8</id>
        <label>NME7</label>
    </interactant>
    <organismsDiffer>false</organismsDiffer>
    <experiments>3</experiments>
</comment>
<comment type="interaction">
    <interactant intactId="EBI-19954058">
        <id>O15499</id>
    </interactant>
    <interactant intactId="EBI-742503">
        <id>Q9UNF0</id>
        <label>PACSIN2</label>
    </interactant>
    <organismsDiffer>false</organismsDiffer>
    <experiments>3</experiments>
</comment>
<comment type="interaction">
    <interactant intactId="EBI-19954058">
        <id>O15499</id>
    </interactant>
    <interactant intactId="EBI-12169289">
        <id>Q08493-2</id>
        <label>PDE4C</label>
    </interactant>
    <organismsDiffer>false</organismsDiffer>
    <experiments>3</experiments>
</comment>
<comment type="interaction">
    <interactant intactId="EBI-19954058">
        <id>O15499</id>
    </interactant>
    <interactant intactId="EBI-1053424">
        <id>O43741</id>
        <label>PRKAB2</label>
    </interactant>
    <organismsDiffer>false</organismsDiffer>
    <experiments>3</experiments>
</comment>
<comment type="interaction">
    <interactant intactId="EBI-19954058">
        <id>O15499</id>
    </interactant>
    <interactant intactId="EBI-4291023">
        <id>Q96BW5</id>
        <label>PTER</label>
    </interactant>
    <organismsDiffer>false</organismsDiffer>
    <experiments>3</experiments>
</comment>
<comment type="interaction">
    <interactant intactId="EBI-19954058">
        <id>O15499</id>
    </interactant>
    <interactant intactId="EBI-1222181">
        <id>Q9H7N4</id>
        <label>SCAF1</label>
    </interactant>
    <organismsDiffer>false</organismsDiffer>
    <experiments>3</experiments>
</comment>
<comment type="interaction">
    <interactant intactId="EBI-19954058">
        <id>O15499</id>
    </interactant>
    <interactant intactId="EBI-727004">
        <id>O00560</id>
        <label>SDCBP</label>
    </interactant>
    <organismsDiffer>false</organismsDiffer>
    <experiments>3</experiments>
</comment>
<comment type="interaction">
    <interactant intactId="EBI-19954058">
        <id>O15499</id>
    </interactant>
    <interactant intactId="EBI-2515360">
        <id>Q9BVW5</id>
        <label>TIPIN</label>
    </interactant>
    <organismsDiffer>false</organismsDiffer>
    <experiments>3</experiments>
</comment>
<comment type="interaction">
    <interactant intactId="EBI-19954058">
        <id>O15499</id>
    </interactant>
    <interactant intactId="EBI-12076664">
        <id>O14787-2</id>
        <label>TNPO2</label>
    </interactant>
    <organismsDiffer>false</organismsDiffer>
    <experiments>3</experiments>
</comment>
<comment type="interaction">
    <interactant intactId="EBI-19954058">
        <id>O15499</id>
    </interactant>
    <interactant intactId="EBI-746981">
        <id>Q969E8</id>
        <label>TSR2</label>
    </interactant>
    <organismsDiffer>false</organismsDiffer>
    <experiments>3</experiments>
</comment>
<comment type="interaction">
    <interactant intactId="EBI-19954058">
        <id>O15499</id>
    </interactant>
    <interactant intactId="EBI-2340879">
        <id>Q712K3</id>
        <label>UBE2R2</label>
    </interactant>
    <organismsDiffer>false</organismsDiffer>
    <experiments>3</experiments>
</comment>
<comment type="interaction">
    <interactant intactId="EBI-19954058">
        <id>O15499</id>
    </interactant>
    <interactant intactId="EBI-11983741">
        <id>Q3SXR9</id>
        <label>VCX2</label>
    </interactant>
    <organismsDiffer>false</organismsDiffer>
    <experiments>3</experiments>
</comment>
<comment type="interaction">
    <interactant intactId="EBI-19954058">
        <id>O15499</id>
    </interactant>
    <interactant intactId="EBI-717592">
        <id>Q13426</id>
        <label>XRCC4</label>
    </interactant>
    <organismsDiffer>false</organismsDiffer>
    <experiments>3</experiments>
</comment>
<comment type="interaction">
    <interactant intactId="EBI-19954058">
        <id>O15499</id>
    </interactant>
    <interactant intactId="EBI-11721624">
        <id>P62699</id>
        <label>YPEL5</label>
    </interactant>
    <organismsDiffer>false</organismsDiffer>
    <experiments>3</experiments>
</comment>
<comment type="interaction">
    <interactant intactId="EBI-19954058">
        <id>O15499</id>
    </interactant>
    <interactant intactId="EBI-12010736">
        <id>Q8N0Y2-2</id>
        <label>ZNF444</label>
    </interactant>
    <organismsDiffer>false</organismsDiffer>
    <experiments>3</experiments>
</comment>
<comment type="interaction">
    <interactant intactId="EBI-19954058">
        <id>O15499</id>
    </interactant>
    <interactant intactId="EBI-6427977">
        <id>Q96SQ5</id>
        <label>ZNF587</label>
    </interactant>
    <organismsDiffer>false</organismsDiffer>
    <experiments>3</experiments>
</comment>
<comment type="subcellular location">
    <subcellularLocation>
        <location evidence="1">Nucleus</location>
    </subcellularLocation>
</comment>
<comment type="tissue specificity">
    <text>Detected in adult testis and pituitary, and in 9-10 week fetal tissue (thorax). Probably expressed in other tissues at low levels.</text>
</comment>
<comment type="developmental stage">
    <text>Expressed in early human development as well as in a limited number of adult tissues.</text>
</comment>
<comment type="similarity">
    <text evidence="4">Belongs to the paired homeobox family. Bicoid subfamily.</text>
</comment>
<dbReference type="EMBL" id="U96402">
    <property type="protein sequence ID" value="AAC39544.1"/>
    <property type="molecule type" value="Genomic_DNA"/>
</dbReference>
<dbReference type="CCDS" id="CCDS13757.1"/>
<dbReference type="RefSeq" id="NP_005306.1">
    <property type="nucleotide sequence ID" value="NM_005315.2"/>
</dbReference>
<dbReference type="SMR" id="O15499"/>
<dbReference type="BioGRID" id="109183">
    <property type="interactions" value="60"/>
</dbReference>
<dbReference type="FunCoup" id="O15499">
    <property type="interactions" value="385"/>
</dbReference>
<dbReference type="IntAct" id="O15499">
    <property type="interactions" value="57"/>
</dbReference>
<dbReference type="STRING" id="9606.ENSP00000086933"/>
<dbReference type="iPTMnet" id="O15499"/>
<dbReference type="PhosphoSitePlus" id="O15499"/>
<dbReference type="BioMuta" id="GSC2"/>
<dbReference type="MassIVE" id="O15499"/>
<dbReference type="PaxDb" id="9606-ENSP00000086933"/>
<dbReference type="Antibodypedia" id="7476">
    <property type="antibodies" value="64 antibodies from 21 providers"/>
</dbReference>
<dbReference type="DNASU" id="2928"/>
<dbReference type="Ensembl" id="ENST00000086933.3">
    <property type="protein sequence ID" value="ENSP00000086933.2"/>
    <property type="gene ID" value="ENSG00000063515.3"/>
</dbReference>
<dbReference type="GeneID" id="2928"/>
<dbReference type="KEGG" id="hsa:2928"/>
<dbReference type="MANE-Select" id="ENST00000086933.3">
    <property type="protein sequence ID" value="ENSP00000086933.2"/>
    <property type="RefSeq nucleotide sequence ID" value="NM_005315.2"/>
    <property type="RefSeq protein sequence ID" value="NP_005306.1"/>
</dbReference>
<dbReference type="UCSC" id="uc011ags.3">
    <property type="organism name" value="human"/>
</dbReference>
<dbReference type="AGR" id="HGNC:4613"/>
<dbReference type="CTD" id="2928"/>
<dbReference type="DisGeNET" id="2928"/>
<dbReference type="GeneCards" id="GSC2"/>
<dbReference type="HGNC" id="HGNC:4613">
    <property type="gene designation" value="GSC2"/>
</dbReference>
<dbReference type="HPA" id="ENSG00000063515">
    <property type="expression patterns" value="Group enriched (retina, testis)"/>
</dbReference>
<dbReference type="MIM" id="601845">
    <property type="type" value="gene"/>
</dbReference>
<dbReference type="neXtProt" id="NX_O15499"/>
<dbReference type="OpenTargets" id="ENSG00000063515"/>
<dbReference type="PharmGKB" id="PA162390265"/>
<dbReference type="VEuPathDB" id="HostDB:ENSG00000063515"/>
<dbReference type="eggNOG" id="KOG0490">
    <property type="taxonomic scope" value="Eukaryota"/>
</dbReference>
<dbReference type="GeneTree" id="ENSGT00940000162536"/>
<dbReference type="HOGENOM" id="CLU_122191_0_0_1"/>
<dbReference type="InParanoid" id="O15499"/>
<dbReference type="OMA" id="WLDTRFP"/>
<dbReference type="OrthoDB" id="3225452at2759"/>
<dbReference type="PAN-GO" id="O15499">
    <property type="GO annotations" value="4 GO annotations based on evolutionary models"/>
</dbReference>
<dbReference type="PhylomeDB" id="O15499"/>
<dbReference type="TreeFam" id="TF351613"/>
<dbReference type="PathwayCommons" id="O15499"/>
<dbReference type="SignaLink" id="O15499"/>
<dbReference type="BioGRID-ORCS" id="2928">
    <property type="hits" value="23 hits in 1163 CRISPR screens"/>
</dbReference>
<dbReference type="GenomeRNAi" id="2928"/>
<dbReference type="Pharos" id="O15499">
    <property type="development level" value="Tbio"/>
</dbReference>
<dbReference type="PRO" id="PR:O15499"/>
<dbReference type="Proteomes" id="UP000005640">
    <property type="component" value="Chromosome 22"/>
</dbReference>
<dbReference type="RNAct" id="O15499">
    <property type="molecule type" value="protein"/>
</dbReference>
<dbReference type="Bgee" id="ENSG00000063515">
    <property type="expression patterns" value="Expressed in primordial germ cell in gonad and 8 other cell types or tissues"/>
</dbReference>
<dbReference type="GO" id="GO:0000785">
    <property type="term" value="C:chromatin"/>
    <property type="evidence" value="ECO:0000247"/>
    <property type="project" value="NTNU_SB"/>
</dbReference>
<dbReference type="GO" id="GO:0005634">
    <property type="term" value="C:nucleus"/>
    <property type="evidence" value="ECO:0000318"/>
    <property type="project" value="GO_Central"/>
</dbReference>
<dbReference type="GO" id="GO:0003677">
    <property type="term" value="F:DNA binding"/>
    <property type="evidence" value="ECO:0000304"/>
    <property type="project" value="ProtInc"/>
</dbReference>
<dbReference type="GO" id="GO:0003700">
    <property type="term" value="F:DNA-binding transcription factor activity"/>
    <property type="evidence" value="ECO:0000314"/>
    <property type="project" value="MGI"/>
</dbReference>
<dbReference type="GO" id="GO:0000981">
    <property type="term" value="F:DNA-binding transcription factor activity, RNA polymerase II-specific"/>
    <property type="evidence" value="ECO:0000247"/>
    <property type="project" value="NTNU_SB"/>
</dbReference>
<dbReference type="GO" id="GO:0000978">
    <property type="term" value="F:RNA polymerase II cis-regulatory region sequence-specific DNA binding"/>
    <property type="evidence" value="ECO:0000318"/>
    <property type="project" value="GO_Central"/>
</dbReference>
<dbReference type="GO" id="GO:0043565">
    <property type="term" value="F:sequence-specific DNA binding"/>
    <property type="evidence" value="ECO:0000314"/>
    <property type="project" value="NTNU_SB"/>
</dbReference>
<dbReference type="GO" id="GO:1990837">
    <property type="term" value="F:sequence-specific double-stranded DNA binding"/>
    <property type="evidence" value="ECO:0000314"/>
    <property type="project" value="ARUK-UCL"/>
</dbReference>
<dbReference type="GO" id="GO:0009653">
    <property type="term" value="P:anatomical structure morphogenesis"/>
    <property type="evidence" value="ECO:0000304"/>
    <property type="project" value="ProtInc"/>
</dbReference>
<dbReference type="GO" id="GO:0006357">
    <property type="term" value="P:regulation of transcription by RNA polymerase II"/>
    <property type="evidence" value="ECO:0000314"/>
    <property type="project" value="MGI"/>
</dbReference>
<dbReference type="CDD" id="cd00086">
    <property type="entry name" value="homeodomain"/>
    <property type="match status" value="1"/>
</dbReference>
<dbReference type="FunFam" id="1.10.10.60:FF:000223">
    <property type="entry name" value="Goosecoid homeobox 2"/>
    <property type="match status" value="1"/>
</dbReference>
<dbReference type="Gene3D" id="1.10.10.60">
    <property type="entry name" value="Homeodomain-like"/>
    <property type="match status" value="1"/>
</dbReference>
<dbReference type="InterPro" id="IPR051440">
    <property type="entry name" value="Goosecoid-like_HB"/>
</dbReference>
<dbReference type="InterPro" id="IPR001356">
    <property type="entry name" value="HD"/>
</dbReference>
<dbReference type="InterPro" id="IPR017970">
    <property type="entry name" value="Homeobox_CS"/>
</dbReference>
<dbReference type="InterPro" id="IPR009057">
    <property type="entry name" value="Homeodomain-like_sf"/>
</dbReference>
<dbReference type="PANTHER" id="PTHR46643:SF1">
    <property type="entry name" value="HOMEOBOX PROTEIN GOOSECOID-2"/>
    <property type="match status" value="1"/>
</dbReference>
<dbReference type="PANTHER" id="PTHR46643">
    <property type="entry name" value="HOMEOBOX PROTEIN GOOSECOID-RELATED"/>
    <property type="match status" value="1"/>
</dbReference>
<dbReference type="Pfam" id="PF00046">
    <property type="entry name" value="Homeodomain"/>
    <property type="match status" value="1"/>
</dbReference>
<dbReference type="SMART" id="SM00389">
    <property type="entry name" value="HOX"/>
    <property type="match status" value="1"/>
</dbReference>
<dbReference type="SUPFAM" id="SSF46689">
    <property type="entry name" value="Homeodomain-like"/>
    <property type="match status" value="1"/>
</dbReference>
<dbReference type="PROSITE" id="PS00027">
    <property type="entry name" value="HOMEOBOX_1"/>
    <property type="match status" value="1"/>
</dbReference>
<dbReference type="PROSITE" id="PS50071">
    <property type="entry name" value="HOMEOBOX_2"/>
    <property type="match status" value="1"/>
</dbReference>
<protein>
    <recommendedName>
        <fullName>Homeobox protein goosecoid-2</fullName>
        <shortName>GSC-2</shortName>
    </recommendedName>
    <alternativeName>
        <fullName>Homeobox protein goosecoid-like</fullName>
        <shortName>GSC-L</shortName>
    </alternativeName>
</protein>
<accession>O15499</accession>
<proteinExistence type="evidence at protein level"/>
<gene>
    <name type="primary">GSC2</name>
    <name type="synonym">GSCL</name>
</gene>
<name>GSC2_HUMAN</name>
<feature type="chain" id="PRO_0000048891" description="Homeobox protein goosecoid-2">
    <location>
        <begin position="1"/>
        <end position="205"/>
    </location>
</feature>
<feature type="DNA-binding region" description="Homeobox" evidence="1">
    <location>
        <begin position="126"/>
        <end position="185"/>
    </location>
</feature>
<feature type="region of interest" description="Disordered" evidence="2">
    <location>
        <begin position="33"/>
        <end position="58"/>
    </location>
</feature>
<feature type="region of interest" description="Disordered" evidence="2">
    <location>
        <begin position="185"/>
        <end position="205"/>
    </location>
</feature>
<feature type="sequence variant" id="VAR_008549" description="In dbSNP:rs34341950." evidence="3">
    <original>R</original>
    <variation>C</variation>
    <location>
        <position position="47"/>
    </location>
</feature>
<organism>
    <name type="scientific">Homo sapiens</name>
    <name type="common">Human</name>
    <dbReference type="NCBI Taxonomy" id="9606"/>
    <lineage>
        <taxon>Eukaryota</taxon>
        <taxon>Metazoa</taxon>
        <taxon>Chordata</taxon>
        <taxon>Craniata</taxon>
        <taxon>Vertebrata</taxon>
        <taxon>Euteleostomi</taxon>
        <taxon>Mammalia</taxon>
        <taxon>Eutheria</taxon>
        <taxon>Euarchontoglires</taxon>
        <taxon>Primates</taxon>
        <taxon>Haplorrhini</taxon>
        <taxon>Catarrhini</taxon>
        <taxon>Hominidae</taxon>
        <taxon>Homo</taxon>
    </lineage>
</organism>
<evidence type="ECO:0000255" key="1">
    <source>
        <dbReference type="PROSITE-ProRule" id="PRU00108"/>
    </source>
</evidence>
<evidence type="ECO:0000256" key="2">
    <source>
        <dbReference type="SAM" id="MobiDB-lite"/>
    </source>
</evidence>
<evidence type="ECO:0000269" key="3">
    <source>
    </source>
</evidence>
<evidence type="ECO:0000305" key="4"/>
<sequence>MAAAAGGAASRRGAGRPCPFSIEHILSSLPERSLPARAACPPQPAGRQSPAKPEEPGAPEAAPCACCCCCGPRAAPCGPPEAAAGLGARLAWPLRLGPAVPLSLGAPAGGSGALPGAVGPGSQRRTRRHRTIFSEEQLQALEALFVQNQYPDVSTRERLAGRIRLREERVEVWFKNRRAKWRHQKRASASARLLPGVKKSPKGSC</sequence>
<reference key="1">
    <citation type="journal article" date="1997" name="Genomics">
        <title>Characterization and mutation analysis of goosecoid-like (GSCL), a homeodomain-containing gene that maps to the critical region for VCFS/DGS on 22q11.</title>
        <authorList>
            <person name="Funke B."/>
            <person name="St Jore B."/>
            <person name="Puech A."/>
            <person name="Sirotkin H."/>
            <person name="Edelmann L."/>
            <person name="Carlson C."/>
            <person name="Raft S."/>
            <person name="Pandita R.K."/>
            <person name="Kucherlapati R."/>
            <person name="Skoultchi A."/>
            <person name="Morrow B.E."/>
        </authorList>
    </citation>
    <scope>NUCLEOTIDE SEQUENCE [GENOMIC DNA]</scope>
    <scope>VARIANT CYS-47</scope>
</reference>
<reference key="2">
    <citation type="journal article" date="1997" name="Am. J. Hum. Genet.">
        <title>The DiGeorge syndrome minimal critical region contains a goosecoid-like (GSCL) homeobox gene that is expressed early in human development.</title>
        <authorList>
            <person name="Gottlieb S."/>
            <person name="Emanuel B.S."/>
            <person name="Driscoll D.A."/>
            <person name="Sellinger B."/>
            <person name="Wang Z."/>
            <person name="Roe B."/>
            <person name="Budarf M.L."/>
        </authorList>
    </citation>
    <scope>NUCLEOTIDE SEQUENCE [GENOMIC DNA]</scope>
</reference>
<keyword id="KW-0238">DNA-binding</keyword>
<keyword id="KW-0371">Homeobox</keyword>
<keyword id="KW-0539">Nucleus</keyword>
<keyword id="KW-1185">Reference proteome</keyword>